<feature type="chain" id="PRO_0000177729" description="Peptide chain release factor 1">
    <location>
        <begin position="1"/>
        <end position="361"/>
    </location>
</feature>
<feature type="modified residue" description="N5-methylglutamine" evidence="1">
    <location>
        <position position="235"/>
    </location>
</feature>
<proteinExistence type="inferred from homology"/>
<gene>
    <name evidence="1" type="primary">prfA</name>
    <name type="ordered locus">RPA0606</name>
</gene>
<evidence type="ECO:0000255" key="1">
    <source>
        <dbReference type="HAMAP-Rule" id="MF_00093"/>
    </source>
</evidence>
<organism>
    <name type="scientific">Rhodopseudomonas palustris (strain ATCC BAA-98 / CGA009)</name>
    <dbReference type="NCBI Taxonomy" id="258594"/>
    <lineage>
        <taxon>Bacteria</taxon>
        <taxon>Pseudomonadati</taxon>
        <taxon>Pseudomonadota</taxon>
        <taxon>Alphaproteobacteria</taxon>
        <taxon>Hyphomicrobiales</taxon>
        <taxon>Nitrobacteraceae</taxon>
        <taxon>Rhodopseudomonas</taxon>
    </lineage>
</organism>
<comment type="function">
    <text evidence="1">Peptide chain release factor 1 directs the termination of translation in response to the peptide chain termination codons UAG and UAA.</text>
</comment>
<comment type="subcellular location">
    <subcellularLocation>
        <location evidence="1">Cytoplasm</location>
    </subcellularLocation>
</comment>
<comment type="PTM">
    <text evidence="1">Methylated by PrmC. Methylation increases the termination efficiency of RF1.</text>
</comment>
<comment type="similarity">
    <text evidence="1">Belongs to the prokaryotic/mitochondrial release factor family.</text>
</comment>
<sequence>MSTLPEAKLDVLLAHHAALEAQLMAQVGAEDYVRITRELSELNPLVEAVKSYRQVRDELGEIDELLEDPATEPEMRAMAEAERDALDAHRDELIQQIRIALLPKDAMDERNVMLEIRAGTGGDEASLFAGDLFRMYEKFAALQGWSVEVISASEGTVGGYKEIIAEVKGRGAFAKLKFESGVHRVQRVPDTETQGRIHTSAATVAVLPEVEDVDVDIKQDDLRIETMRAQGAGGQHVNKTESAIRITHLPTGIVVMMQDSRSQHKNRASAMNILRSRIYDAEQQRLDAARSAERKAKVGSGDRSERIRTYNFPQGRVTDHRINLTLYKLPQVIAGEALGELIDALTTEHQAAQLAEQGNAA</sequence>
<dbReference type="EMBL" id="BX572594">
    <property type="protein sequence ID" value="CAE26050.1"/>
    <property type="molecule type" value="Genomic_DNA"/>
</dbReference>
<dbReference type="RefSeq" id="WP_011156174.1">
    <property type="nucleotide sequence ID" value="NZ_CP116810.1"/>
</dbReference>
<dbReference type="SMR" id="Q6NC66"/>
<dbReference type="STRING" id="258594.RPA0606"/>
<dbReference type="GeneID" id="66891626"/>
<dbReference type="eggNOG" id="COG0216">
    <property type="taxonomic scope" value="Bacteria"/>
</dbReference>
<dbReference type="HOGENOM" id="CLU_036856_0_1_5"/>
<dbReference type="PhylomeDB" id="Q6NC66"/>
<dbReference type="GO" id="GO:0005737">
    <property type="term" value="C:cytoplasm"/>
    <property type="evidence" value="ECO:0007669"/>
    <property type="project" value="UniProtKB-SubCell"/>
</dbReference>
<dbReference type="GO" id="GO:0016149">
    <property type="term" value="F:translation release factor activity, codon specific"/>
    <property type="evidence" value="ECO:0007669"/>
    <property type="project" value="UniProtKB-UniRule"/>
</dbReference>
<dbReference type="FunFam" id="3.30.160.20:FF:000004">
    <property type="entry name" value="Peptide chain release factor 1"/>
    <property type="match status" value="1"/>
</dbReference>
<dbReference type="FunFam" id="3.30.70.1660:FF:000002">
    <property type="entry name" value="Peptide chain release factor 1"/>
    <property type="match status" value="1"/>
</dbReference>
<dbReference type="FunFam" id="3.30.70.1660:FF:000004">
    <property type="entry name" value="Peptide chain release factor 1"/>
    <property type="match status" value="1"/>
</dbReference>
<dbReference type="Gene3D" id="3.30.160.20">
    <property type="match status" value="1"/>
</dbReference>
<dbReference type="Gene3D" id="3.30.70.1660">
    <property type="match status" value="2"/>
</dbReference>
<dbReference type="Gene3D" id="6.10.140.1950">
    <property type="match status" value="1"/>
</dbReference>
<dbReference type="HAMAP" id="MF_00093">
    <property type="entry name" value="Rel_fac_1"/>
    <property type="match status" value="1"/>
</dbReference>
<dbReference type="InterPro" id="IPR005139">
    <property type="entry name" value="PCRF"/>
</dbReference>
<dbReference type="InterPro" id="IPR000352">
    <property type="entry name" value="Pep_chain_release_fac_I"/>
</dbReference>
<dbReference type="InterPro" id="IPR045853">
    <property type="entry name" value="Pep_chain_release_fac_I_sf"/>
</dbReference>
<dbReference type="InterPro" id="IPR050057">
    <property type="entry name" value="Prokaryotic/Mito_RF"/>
</dbReference>
<dbReference type="InterPro" id="IPR004373">
    <property type="entry name" value="RF-1"/>
</dbReference>
<dbReference type="NCBIfam" id="TIGR00019">
    <property type="entry name" value="prfA"/>
    <property type="match status" value="1"/>
</dbReference>
<dbReference type="NCBIfam" id="NF001859">
    <property type="entry name" value="PRK00591.1"/>
    <property type="match status" value="1"/>
</dbReference>
<dbReference type="PANTHER" id="PTHR43804">
    <property type="entry name" value="LD18447P"/>
    <property type="match status" value="1"/>
</dbReference>
<dbReference type="PANTHER" id="PTHR43804:SF7">
    <property type="entry name" value="LD18447P"/>
    <property type="match status" value="1"/>
</dbReference>
<dbReference type="Pfam" id="PF03462">
    <property type="entry name" value="PCRF"/>
    <property type="match status" value="1"/>
</dbReference>
<dbReference type="Pfam" id="PF00472">
    <property type="entry name" value="RF-1"/>
    <property type="match status" value="1"/>
</dbReference>
<dbReference type="SMART" id="SM00937">
    <property type="entry name" value="PCRF"/>
    <property type="match status" value="1"/>
</dbReference>
<dbReference type="SUPFAM" id="SSF75620">
    <property type="entry name" value="Release factor"/>
    <property type="match status" value="1"/>
</dbReference>
<dbReference type="PROSITE" id="PS00745">
    <property type="entry name" value="RF_PROK_I"/>
    <property type="match status" value="1"/>
</dbReference>
<reference key="1">
    <citation type="journal article" date="2004" name="Nat. Biotechnol.">
        <title>Complete genome sequence of the metabolically versatile photosynthetic bacterium Rhodopseudomonas palustris.</title>
        <authorList>
            <person name="Larimer F.W."/>
            <person name="Chain P."/>
            <person name="Hauser L."/>
            <person name="Lamerdin J.E."/>
            <person name="Malfatti S."/>
            <person name="Do L."/>
            <person name="Land M.L."/>
            <person name="Pelletier D.A."/>
            <person name="Beatty J.T."/>
            <person name="Lang A.S."/>
            <person name="Tabita F.R."/>
            <person name="Gibson J.L."/>
            <person name="Hanson T.E."/>
            <person name="Bobst C."/>
            <person name="Torres y Torres J.L."/>
            <person name="Peres C."/>
            <person name="Harrison F.H."/>
            <person name="Gibson J."/>
            <person name="Harwood C.S."/>
        </authorList>
    </citation>
    <scope>NUCLEOTIDE SEQUENCE [LARGE SCALE GENOMIC DNA]</scope>
    <source>
        <strain>ATCC BAA-98 / CGA009</strain>
    </source>
</reference>
<name>RF1_RHOPA</name>
<keyword id="KW-0963">Cytoplasm</keyword>
<keyword id="KW-0488">Methylation</keyword>
<keyword id="KW-0648">Protein biosynthesis</keyword>
<protein>
    <recommendedName>
        <fullName evidence="1">Peptide chain release factor 1</fullName>
        <shortName evidence="1">RF-1</shortName>
    </recommendedName>
</protein>
<accession>Q6NC66</accession>